<dbReference type="EMBL" id="CP017625">
    <property type="protein sequence ID" value="AOW28708.1"/>
    <property type="molecule type" value="Genomic_DNA"/>
</dbReference>
<dbReference type="RefSeq" id="XP_719891.1">
    <property type="nucleotide sequence ID" value="XM_714798.1"/>
</dbReference>
<dbReference type="SMR" id="Q5ADP6"/>
<dbReference type="FunCoup" id="Q5ADP6">
    <property type="interactions" value="351"/>
</dbReference>
<dbReference type="STRING" id="237561.Q5ADP6"/>
<dbReference type="EnsemblFungi" id="C3_07050W_A-T">
    <property type="protein sequence ID" value="C3_07050W_A-T-p1"/>
    <property type="gene ID" value="C3_07050W_A"/>
</dbReference>
<dbReference type="GeneID" id="3638515"/>
<dbReference type="KEGG" id="cal:CAALFM_C307050WA"/>
<dbReference type="CGD" id="CAL0000178918">
    <property type="gene designation" value="orf19.14087"/>
</dbReference>
<dbReference type="VEuPathDB" id="FungiDB:C3_07050W_A"/>
<dbReference type="eggNOG" id="ENOG502S9WJ">
    <property type="taxonomic scope" value="Eukaryota"/>
</dbReference>
<dbReference type="HOGENOM" id="CLU_134052_2_1_1"/>
<dbReference type="InParanoid" id="Q5ADP6"/>
<dbReference type="OMA" id="YESGWFD"/>
<dbReference type="OrthoDB" id="6221744at2759"/>
<dbReference type="PHI-base" id="PHI:8892"/>
<dbReference type="PRO" id="PR:Q5ADP6"/>
<dbReference type="Proteomes" id="UP000000559">
    <property type="component" value="Chromosome 3"/>
</dbReference>
<dbReference type="GO" id="GO:0071819">
    <property type="term" value="C:DUBm complex"/>
    <property type="evidence" value="ECO:0000318"/>
    <property type="project" value="GO_Central"/>
</dbReference>
<dbReference type="GO" id="GO:0005643">
    <property type="term" value="C:nuclear pore"/>
    <property type="evidence" value="ECO:0007669"/>
    <property type="project" value="UniProtKB-UniRule"/>
</dbReference>
<dbReference type="GO" id="GO:0005654">
    <property type="term" value="C:nucleoplasm"/>
    <property type="evidence" value="ECO:0007669"/>
    <property type="project" value="UniProtKB-SubCell"/>
</dbReference>
<dbReference type="GO" id="GO:0000932">
    <property type="term" value="C:P-body"/>
    <property type="evidence" value="ECO:0007669"/>
    <property type="project" value="UniProtKB-SubCell"/>
</dbReference>
<dbReference type="GO" id="GO:0000124">
    <property type="term" value="C:SAGA complex"/>
    <property type="evidence" value="ECO:0000318"/>
    <property type="project" value="GO_Central"/>
</dbReference>
<dbReference type="GO" id="GO:0070390">
    <property type="term" value="C:transcription export complex 2"/>
    <property type="evidence" value="ECO:0007669"/>
    <property type="project" value="UniProtKB-UniRule"/>
</dbReference>
<dbReference type="GO" id="GO:0003682">
    <property type="term" value="F:chromatin binding"/>
    <property type="evidence" value="ECO:0000318"/>
    <property type="project" value="GO_Central"/>
</dbReference>
<dbReference type="GO" id="GO:0003713">
    <property type="term" value="F:transcription coactivator activity"/>
    <property type="evidence" value="ECO:0000318"/>
    <property type="project" value="GO_Central"/>
</dbReference>
<dbReference type="GO" id="GO:0006325">
    <property type="term" value="P:chromatin organization"/>
    <property type="evidence" value="ECO:0007669"/>
    <property type="project" value="UniProtKB-KW"/>
</dbReference>
<dbReference type="GO" id="GO:0016973">
    <property type="term" value="P:poly(A)+ mRNA export from nucleus"/>
    <property type="evidence" value="ECO:0000318"/>
    <property type="project" value="GO_Central"/>
</dbReference>
<dbReference type="GO" id="GO:0015031">
    <property type="term" value="P:protein transport"/>
    <property type="evidence" value="ECO:0007669"/>
    <property type="project" value="UniProtKB-KW"/>
</dbReference>
<dbReference type="GO" id="GO:0006357">
    <property type="term" value="P:regulation of transcription by RNA polymerase II"/>
    <property type="evidence" value="ECO:0000318"/>
    <property type="project" value="GO_Central"/>
</dbReference>
<dbReference type="GO" id="GO:0006368">
    <property type="term" value="P:transcription elongation by RNA polymerase II"/>
    <property type="evidence" value="ECO:0007669"/>
    <property type="project" value="UniProtKB-UniRule"/>
</dbReference>
<dbReference type="Gene3D" id="1.10.246.140">
    <property type="match status" value="1"/>
</dbReference>
<dbReference type="HAMAP" id="MF_03046">
    <property type="entry name" value="ENY2_Sus1"/>
    <property type="match status" value="1"/>
</dbReference>
<dbReference type="InterPro" id="IPR018783">
    <property type="entry name" value="TF_ENY2"/>
</dbReference>
<dbReference type="InterPro" id="IPR038212">
    <property type="entry name" value="TF_EnY2_sf"/>
</dbReference>
<dbReference type="PANTHER" id="PTHR12514">
    <property type="entry name" value="ENHANCER OF YELLOW 2 TRANSCRIPTION FACTOR"/>
    <property type="match status" value="1"/>
</dbReference>
<dbReference type="Pfam" id="PF10163">
    <property type="entry name" value="EnY2"/>
    <property type="match status" value="1"/>
</dbReference>
<proteinExistence type="inferred from homology"/>
<protein>
    <recommendedName>
        <fullName evidence="2">Transcription and mRNA export factor SUS1</fullName>
    </recommendedName>
</protein>
<reference key="1">
    <citation type="journal article" date="2004" name="Proc. Natl. Acad. Sci. U.S.A.">
        <title>The diploid genome sequence of Candida albicans.</title>
        <authorList>
            <person name="Jones T."/>
            <person name="Federspiel N.A."/>
            <person name="Chibana H."/>
            <person name="Dungan J."/>
            <person name="Kalman S."/>
            <person name="Magee B.B."/>
            <person name="Newport G."/>
            <person name="Thorstenson Y.R."/>
            <person name="Agabian N."/>
            <person name="Magee P.T."/>
            <person name="Davis R.W."/>
            <person name="Scherer S."/>
        </authorList>
    </citation>
    <scope>NUCLEOTIDE SEQUENCE [LARGE SCALE GENOMIC DNA]</scope>
    <source>
        <strain>SC5314 / ATCC MYA-2876</strain>
    </source>
</reference>
<reference key="2">
    <citation type="journal article" date="2007" name="Genome Biol.">
        <title>Assembly of the Candida albicans genome into sixteen supercontigs aligned on the eight chromosomes.</title>
        <authorList>
            <person name="van het Hoog M."/>
            <person name="Rast T.J."/>
            <person name="Martchenko M."/>
            <person name="Grindle S."/>
            <person name="Dignard D."/>
            <person name="Hogues H."/>
            <person name="Cuomo C."/>
            <person name="Berriman M."/>
            <person name="Scherer S."/>
            <person name="Magee B.B."/>
            <person name="Whiteway M."/>
            <person name="Chibana H."/>
            <person name="Nantel A."/>
            <person name="Magee P.T."/>
        </authorList>
    </citation>
    <scope>GENOME REANNOTATION</scope>
    <source>
        <strain>SC5314 / ATCC MYA-2876</strain>
    </source>
</reference>
<reference key="3">
    <citation type="journal article" date="2013" name="Genome Biol.">
        <title>Assembly of a phased diploid Candida albicans genome facilitates allele-specific measurements and provides a simple model for repeat and indel structure.</title>
        <authorList>
            <person name="Muzzey D."/>
            <person name="Schwartz K."/>
            <person name="Weissman J.S."/>
            <person name="Sherlock G."/>
        </authorList>
    </citation>
    <scope>NUCLEOTIDE SEQUENCE [LARGE SCALE GENOMIC DNA]</scope>
    <scope>GENOME REANNOTATION</scope>
    <source>
        <strain>SC5314 / ATCC MYA-2876</strain>
    </source>
</reference>
<comment type="function">
    <text evidence="1">Involved in mRNA export coupled transcription activation by association with both the TREX-2 and the SAGA complexes. At the promoters, SAGA is required for recruitment of the basal transcription machinery. It influences RNA polymerase II transcriptional activity through different activities such as TBP interaction and promoter selectivity, interaction with transcription activators, and chromatin modification through histone acetylation and deubiquitination. Within the SAGA complex, participates in a subcomplex required for deubiquitination of H2B and for the maintenance of steady-state H3 methylation levels. The TREX-2 complex functions in docking export-competent ribonucleoprotein particles (mRNPs) to the nuclear entrance of the nuclear pore complex (nuclear basket). TREX-2 participates in mRNA export and accurate chromatin positioning in the nucleus by tethering genes to the nuclear periphery. May also be involved in cytoplasmic mRNA decay by interaction with components of P-bodies (By similarity).</text>
</comment>
<comment type="subunit">
    <text evidence="2">Component of the nuclear pore complex (NPC)-associated TREX-2 complex (transcription and export complex 2), composed of at least SUS1, SAC3, THP1, SEM1, and CDC31. TREX-2 contains 2 SUS1 chains. The TREX-2 complex interacts with the nucleoporin NUP1. Component of the 1.8 MDa SAGA transcription coactivator-HAT complex. SAGA is built of 5 distinct domains with specialized functions. Within the SAGA complex, SUS1, SGF11, SGF73 and UBP8 form an additional subcomplex of SAGA called the DUB module (deubiquitination module). Interacts directly with THP1, SAC3, SGF11, and with the RNA polymerase II.</text>
</comment>
<comment type="subcellular location">
    <subcellularLocation>
        <location evidence="2">Nucleus</location>
        <location evidence="2">Nucleoplasm</location>
    </subcellularLocation>
    <subcellularLocation>
        <location evidence="2">Cytoplasm</location>
        <location evidence="2">P-body</location>
    </subcellularLocation>
</comment>
<comment type="similarity">
    <text evidence="2">Belongs to the ENY2 family.</text>
</comment>
<accession>Q5ADP6</accession>
<accession>A0A1D8PKT8</accession>
<evidence type="ECO:0000250" key="1"/>
<evidence type="ECO:0000255" key="2">
    <source>
        <dbReference type="HAMAP-Rule" id="MF_03046"/>
    </source>
</evidence>
<sequence>MSTNNSTQQQDELDQIKSKIQDNLISSGNYDIINKQLKLQLYESGWYDKVSQIASRELMDHQQEVNSSNSNSSNSNKKNELTFDQLFAFVKPKAEELVPNEVKQDILNRITKYLDDIIQ</sequence>
<name>SUS1_CANAL</name>
<gene>
    <name evidence="2" type="primary">SUS1</name>
    <name type="ordered locus">CAALFM_C307050WA</name>
    <name type="ORF">CaO19.14087</name>
    <name type="ORF">CaO19.6795</name>
</gene>
<feature type="chain" id="PRO_0000367565" description="Transcription and mRNA export factor SUS1">
    <location>
        <begin position="1"/>
        <end position="119"/>
    </location>
</feature>
<organism>
    <name type="scientific">Candida albicans (strain SC5314 / ATCC MYA-2876)</name>
    <name type="common">Yeast</name>
    <dbReference type="NCBI Taxonomy" id="237561"/>
    <lineage>
        <taxon>Eukaryota</taxon>
        <taxon>Fungi</taxon>
        <taxon>Dikarya</taxon>
        <taxon>Ascomycota</taxon>
        <taxon>Saccharomycotina</taxon>
        <taxon>Pichiomycetes</taxon>
        <taxon>Debaryomycetaceae</taxon>
        <taxon>Candida/Lodderomyces clade</taxon>
        <taxon>Candida</taxon>
    </lineage>
</organism>
<keyword id="KW-0010">Activator</keyword>
<keyword id="KW-0156">Chromatin regulator</keyword>
<keyword id="KW-0963">Cytoplasm</keyword>
<keyword id="KW-0509">mRNA transport</keyword>
<keyword id="KW-0539">Nucleus</keyword>
<keyword id="KW-0653">Protein transport</keyword>
<keyword id="KW-1185">Reference proteome</keyword>
<keyword id="KW-0804">Transcription</keyword>
<keyword id="KW-0805">Transcription regulation</keyword>
<keyword id="KW-0811">Translocation</keyword>
<keyword id="KW-0813">Transport</keyword>